<organism>
    <name type="scientific">Mus musculus</name>
    <name type="common">Mouse</name>
    <dbReference type="NCBI Taxonomy" id="10090"/>
    <lineage>
        <taxon>Eukaryota</taxon>
        <taxon>Metazoa</taxon>
        <taxon>Chordata</taxon>
        <taxon>Craniata</taxon>
        <taxon>Vertebrata</taxon>
        <taxon>Euteleostomi</taxon>
        <taxon>Mammalia</taxon>
        <taxon>Eutheria</taxon>
        <taxon>Euarchontoglires</taxon>
        <taxon>Glires</taxon>
        <taxon>Rodentia</taxon>
        <taxon>Myomorpha</taxon>
        <taxon>Muroidea</taxon>
        <taxon>Muridae</taxon>
        <taxon>Murinae</taxon>
        <taxon>Mus</taxon>
        <taxon>Mus</taxon>
    </lineage>
</organism>
<comment type="function">
    <text evidence="3 8 9 10 13 14 15 17 18 21 22 24">Non-selective calcium permeant cation channel involved in osmotic sensitivity and mechanosensitivity (PubMed:11094154, PubMed:12093812, PubMed:12538589). Activation by exposure to hypotonicity within the physiological range exhibits an outward rectification (PubMed:12093812, PubMed:14691263, PubMed:16368742, PubMed:16571723). Also activated by heat, low pH, citrate and phorbol esters (PubMed:14691263). Increase of intracellular Ca(2+) potentiates currents. Channel activity seems to be regulated by a calmodulin-dependent mechanism with a negative feedback mechanism (By similarity). Acts as a regulator of intracellular Ca(2+) in synoviocytes (By similarity). Plays an obligatory role as a molecular component in the nonselective cation channel activation induced by 4-alpha-phorbol 12,13-didecanoate and hypotonic stimulation in synoviocytes and also regulates production of IL-8 (By similarity). Together with PKD2, forms mechano- and thermosensitive channels in cilium (PubMed:18695040). Promotes cell-cell junction formation in skin keratinocytes and plays an important role in the formation and/or maintenance of functional intercellular barriers (PubMed:20413591). Negatively regulates expression of PPARGC1A, UCP1, oxidative metabolism and respiration in adipocytes (PubMed:23021218). Regulates expression of chemokines and cytokines related to pro-inflammatory pathway in adipocytes (PubMed:23021218). Together with AQP5, controls regulatory volume decrease in salivary epithelial cells (PubMed:16571723). Required for normal development and maintenance of bone and cartilage (By similarity). In its inactive state, may sequester DDX3X at the plasma membrane. When activated, the interaction between both proteins is affected and DDX3X relocalizes to the nucleus (By similarity). In neurons of the central nervous system, could play a role in triggering voluntary water intake in response to increased sodium concentration in body fluid (PubMed:27252474).</text>
</comment>
<comment type="catalytic activity">
    <reaction evidence="8 9 10 13">
        <text>Ca(2+)(in) = Ca(2+)(out)</text>
        <dbReference type="Rhea" id="RHEA:29671"/>
        <dbReference type="ChEBI" id="CHEBI:29108"/>
    </reaction>
</comment>
<comment type="subunit">
    <text evidence="3 10 12 15 16 17 18 21 23">Homotetramer. Interacts with calmodulin (By similarity). Interacts with CTNNB1 (PubMed:20413591). The TRPV4 and CTNNB1 complex can interact with CDH1 (PubMed:20413591). Part of a complex containing MLC1, AQP4, HEPACAM and ATP1B1 (By similarity). Interacts with MAP7 and Src family Tyr protein kinases LYN, SRC, FYN, HCK, LCK and YES (PubMed:12538589, PubMed:14517216). Interacts with PACSIN1, PACSIN2 and PACSIN3 (via SH3 domain) (PubMed:16627472, PubMed:18174177). Interacts with ITPR3 (By similarity). Interacts with AQP5; the interaction is probably indirect and regulates TRPV4 activation by hypotonicity (PubMed:16571723). Interacts with ANO1 (PubMed:24509911). Interacts (via C-terminus) with PKD2 (via C-terminus) (PubMed:18695040). Interacts with DDX3X; this interaction is decreased when the channel is activated (By similarity).</text>
</comment>
<comment type="interaction">
    <interactant intactId="EBI-7091763">
        <id>Q9EPK8</id>
    </interactant>
    <interactant intactId="EBI-6273066">
        <id>P55088</id>
        <label>Aqp4</label>
    </interactant>
    <organismsDiffer>false</organismsDiffer>
    <experiments>2</experiments>
</comment>
<comment type="interaction">
    <interactant intactId="EBI-7091763">
        <id>Q9EPK8</id>
    </interactant>
    <interactant intactId="EBI-7813714">
        <id>Q13563</id>
        <label>PKD2</label>
    </interactant>
    <organismsDiffer>true</organismsDiffer>
    <experiments>11</experiments>
</comment>
<comment type="interaction">
    <interactant intactId="EBI-7091763">
        <id>Q9EPK8</id>
    </interactant>
    <interactant intactId="EBI-929665">
        <id>P48995</id>
        <label>TRPC1</label>
    </interactant>
    <organismsDiffer>true</organismsDiffer>
    <experiments>10</experiments>
</comment>
<comment type="interaction">
    <interactant intactId="EBI-7091763">
        <id>Q9EPK8</id>
    </interactant>
    <interactant intactId="EBI-3390054">
        <id>P0CG48</id>
        <label>UBC</label>
    </interactant>
    <organismsDiffer>true</organismsDiffer>
    <experiments>3</experiments>
</comment>
<comment type="subcellular location">
    <subcellularLocation>
        <location evidence="8 13 15 16 21 23">Cell membrane</location>
    </subcellularLocation>
    <subcellularLocation>
        <location evidence="13 15 16 23 27 29">Apical cell membrane</location>
        <topology evidence="3">Multi-pass membrane protein</topology>
    </subcellularLocation>
    <subcellularLocation>
        <location evidence="21">Cell junction</location>
        <location evidence="21">Adherens junction</location>
    </subcellularLocation>
    <subcellularLocation>
        <location evidence="18">Cell projection</location>
        <location evidence="18">Cilium</location>
    </subcellularLocation>
    <text evidence="3">Assembly of the putative homotetramer occurs primarily in the endoplasmic reticulum. Localization to the cell membrane is inhibited by WNK kinases (WNK1, WNK2, WNK3 or WNK4) in a kinase-independent mechanism.</text>
</comment>
<comment type="tissue specificity">
    <text evidence="6 7 8 11 15 16">Detected in liver, kidney, heart, brain cortex, cerebellum and brainstem (at protein level). Expressed in salivary glands (at protein level) (PubMed:16571723). Expressed in heart, lung, spleen, liver, kidney, brain, skeletal muscle and testis. In the central nervous system, expressed in the lamina terminalis (arched vascular organ and neurons of the subfornical organ), median preoptic area, ventral hippocampal commissure, and ependymal cells of the choroid plexus. In the cochlea, expressed in both inner and outer hair cells, and in marginal cells of the cochlear stria vascularis. Expressed in large neurons of the trigeminal ganglion. In the kidney cortex, strongly expressed by epithelial cells of tubules and much weaker in glomeruli.</text>
</comment>
<comment type="domain">
    <text evidence="1">The ANK repeat region mediates interaction with Ca(2+)-calmodulin and ATP binding. The ANK repeat region mediates interaction with phosphatidylinositol-4,5-bisphosphate and related phosphatidylinositides.</text>
</comment>
<comment type="PTM">
    <text evidence="29">N-glycosylated.</text>
</comment>
<comment type="disruption phenotype">
    <text evidence="15 21 22 24">Knockout mice display impairment of the intercellular junction-dependent barrier function in the skin (PubMed:20413591). Increased energy expenditure and improved insulin sensitivity in white adipose tissues is also observed (PubMed:23021218). They also display reduced Ca2+ entry and loss of regulatory volume decrease in response to hypotonicity in acinar cells (PubMed:16571723). The voluntary water intake normally induced by sodium concentration increase in body fluid is impaired (PubMed:27252474).</text>
</comment>
<comment type="similarity">
    <text evidence="26">Belongs to the transient receptor (TC 1.A.4) family. TrpV subfamily. TRPV4 sub-subfamily.</text>
</comment>
<comment type="sequence caution" evidence="26">
    <conflict type="frameshift">
        <sequence resource="EMBL-CDS" id="AAG28028"/>
    </conflict>
</comment>
<comment type="sequence caution" evidence="26">
    <conflict type="erroneous initiation">
        <sequence resource="EMBL-CDS" id="AAK69486"/>
    </conflict>
    <text>Truncated N-terminus.</text>
</comment>
<gene>
    <name type="primary">Trpv4</name>
    <name type="synonym">Trp12</name>
    <name type="synonym">Vrl2</name>
    <name type="synonym">Vroac</name>
</gene>
<name>TRPV4_MOUSE</name>
<proteinExistence type="evidence at protein level"/>
<reference key="1">
    <citation type="journal article" date="2000" name="Cell">
        <title>Vanilloid receptor-related osmotically activated channel (VR-OAC), a candidate vertebrate osmoreceptor.</title>
        <authorList>
            <person name="Liedtke W.B."/>
            <person name="Choe Y."/>
            <person name="Marti-Renom M.A."/>
            <person name="Bell A.M."/>
            <person name="Denis C.S."/>
            <person name="Sali A."/>
            <person name="Hudspeth A.J."/>
            <person name="Friedman J.M."/>
            <person name="Heller S."/>
        </authorList>
    </citation>
    <scope>NUCLEOTIDE SEQUENCE [MRNA]</scope>
    <scope>TISSUE SPECIFICITY</scope>
    <source>
        <tissue>Hypothalamus</tissue>
    </source>
</reference>
<reference key="2">
    <citation type="journal article" date="2000" name="FEBS Lett.">
        <title>Trp12, a novel Trp related protein from kidney.</title>
        <authorList>
            <person name="Wissenbach U."/>
            <person name="Boedding M."/>
            <person name="Freichel M."/>
            <person name="Flockerzi V."/>
        </authorList>
    </citation>
    <scope>NUCLEOTIDE SEQUENCE [MRNA]</scope>
    <scope>FUNCTION</scope>
    <scope>TRANSPORTER ACTIVITY</scope>
    <scope>SUBCELLULAR LOCATION</scope>
    <scope>TISSUE SPECIFICITY</scope>
    <source>
        <tissue>Kidney</tissue>
    </source>
</reference>
<reference key="3">
    <citation type="journal article" date="2000" name="Nat. Cell Biol.">
        <title>OTRPC4, a nonselective cation channel that confers sensitivity to extracellular osmolarity.</title>
        <authorList>
            <person name="Strotmann R."/>
            <person name="Harteneck C."/>
            <person name="Nunnenmacher K."/>
            <person name="Schultz G."/>
            <person name="Plant T.D."/>
        </authorList>
    </citation>
    <scope>NUCLEOTIDE SEQUENCE [MRNA]</scope>
    <scope>TISSUE SPECIFICITY</scope>
    <source>
        <strain>129/SvEv</strain>
    </source>
</reference>
<reference key="4">
    <citation type="journal article" date="2003" name="J. Biol. Chem.">
        <title>Impaired pressure sensation in mice lacking TRPV4.</title>
        <authorList>
            <person name="Suzuki M."/>
            <person name="Mizuno A."/>
            <person name="Kodaira K."/>
            <person name="Imai M."/>
        </authorList>
    </citation>
    <scope>NUCLEOTIDE SEQUENCE [MRNA]</scope>
    <scope>TISSUE SPECIFICITY</scope>
    <source>
        <tissue>Kidney</tissue>
    </source>
</reference>
<reference key="5">
    <citation type="submission" date="2000-06" db="EMBL/GenBank/DDBJ databases">
        <title>Cloning of mouse and human vanilloid receptor-like protein 2 (VRL-2).</title>
        <authorList>
            <person name="Derst C."/>
            <person name="Schafer M.K."/>
        </authorList>
    </citation>
    <scope>NUCLEOTIDE SEQUENCE [MRNA]</scope>
    <source>
        <tissue>Kidney</tissue>
    </source>
</reference>
<reference key="6">
    <citation type="journal article" date="2004" name="Genome Res.">
        <title>The status, quality, and expansion of the NIH full-length cDNA project: the Mammalian Gene Collection (MGC).</title>
        <authorList>
            <consortium name="The MGC Project Team"/>
        </authorList>
    </citation>
    <scope>NUCLEOTIDE SEQUENCE [LARGE SCALE MRNA]</scope>
</reference>
<reference key="7">
    <citation type="journal article" date="2002" name="J. Biol. Chem.">
        <title>Molecular determinants of permeation through the cation channel TRPV4.</title>
        <authorList>
            <person name="Voets T."/>
            <person name="Prenen J."/>
            <person name="Vriens J."/>
            <person name="Watanabe H."/>
            <person name="Janssens A."/>
            <person name="Wissenbach U."/>
            <person name="Bodding M."/>
            <person name="Droogmans G."/>
            <person name="Nilius B."/>
        </authorList>
    </citation>
    <scope>FUNCTION</scope>
    <scope>TRANSPORTER ACTIVITY</scope>
    <scope>SUBCELLULAR LOCATION</scope>
    <scope>MUTAGENESIS OF ASP-672; LYS-675; MET-680 AND ASP-682</scope>
</reference>
<reference key="8">
    <citation type="journal article" date="2003" name="J. Biol. Chem.">
        <title>Microtubule-associated protein 7 increases the membrane expression of transient receptor potential vanilloid 4 (TRPV4).</title>
        <authorList>
            <person name="Suzuki M."/>
            <person name="Hirao A."/>
            <person name="Mizuno A."/>
        </authorList>
    </citation>
    <scope>INTERACTION WITH MAP7</scope>
</reference>
<reference key="9">
    <citation type="journal article" date="2003" name="J. Biol. Chem.">
        <title>Regulation of a transient receptor potential (TRP) channel by tyrosine phosphorylation. SRC family kinase-dependent tyrosine phosphorylation of TRPV4 on TYR-253 mediates its response to hypotonic stress.</title>
        <authorList>
            <person name="Xu H."/>
            <person name="Zhao H."/>
            <person name="Tian W."/>
            <person name="Yoshida K."/>
            <person name="Roullet J.B."/>
            <person name="Cohen D.M."/>
        </authorList>
    </citation>
    <scope>FUNCTION</scope>
    <scope>TRANSPORTER ACTIVITY</scope>
    <scope>INTERACTION WITH LYN; SRC; FYN; HCK; LCK AND YES</scope>
    <scope>PHOSPHORYLATION AT TYR-253</scope>
    <scope>MUTAGENESIS OF TYR-253</scope>
</reference>
<reference key="10">
    <citation type="journal article" date="2004" name="Proc. Natl. Acad. Sci. U.S.A.">
        <title>Cell swelling, heat, and chemical agonists use distinct pathways for the activation of the cation channel TRPV4.</title>
        <authorList>
            <person name="Vriens J."/>
            <person name="Watanabe H."/>
            <person name="Janssens A."/>
            <person name="Droogmans G."/>
            <person name="Voets T."/>
            <person name="Nilius B."/>
        </authorList>
    </citation>
    <scope>FUNCTION</scope>
    <scope>TRANSPORTER ACTIVITY</scope>
    <scope>SUBCELLULAR LOCATION</scope>
    <scope>MUTAGENESIS OF TYR-253; TYR-556 AND SER-557</scope>
</reference>
<reference key="11">
    <citation type="journal article" date="2006" name="Am. J. Physiol.">
        <title>Glycosylation of the osmoresponsive transient receptor potential channel TRPV4 on Asn-651 influences membrane trafficking.</title>
        <authorList>
            <person name="Xu H."/>
            <person name="Fu Y."/>
            <person name="Tian W."/>
            <person name="Cohen D.M."/>
        </authorList>
    </citation>
    <scope>FUNCTION</scope>
    <scope>SUBCELLULAR LOCATION</scope>
    <scope>MUTAGENESIS OF ASN-651</scope>
    <scope>GLYCOSYLATION AT ASN-651</scope>
</reference>
<reference key="12">
    <citation type="journal article" date="2006" name="J. Biol. Chem.">
        <title>A role for AQP5 in activation of TRPV4 by hypotonicity: concerted involvement of AQP5 and TRPV4 in regulation of cell volume recovery.</title>
        <authorList>
            <person name="Liu X."/>
            <person name="Bandyopadhyay B.C."/>
            <person name="Bandyopadhyay B."/>
            <person name="Nakamoto T."/>
            <person name="Singh B."/>
            <person name="Liedtke W."/>
            <person name="Melvin J.E."/>
            <person name="Ambudkar I."/>
        </authorList>
    </citation>
    <scope>FUNCTION</scope>
    <scope>INTERACTION WITH AQP5</scope>
    <scope>SUBCELLULAR LOCATION</scope>
    <scope>TISSUE SPECIFICITY</scope>
    <scope>DISRUPTION PHENOTYPE</scope>
</reference>
<reference key="13">
    <citation type="journal article" date="2006" name="J. Biol. Chem.">
        <title>PACSINs bind to the TRPV4 cation channel. PACSIN 3 modulates the subcellular localization of TRPV4.</title>
        <authorList>
            <person name="Cuajungco M.P."/>
            <person name="Grimm C."/>
            <person name="Oshima K."/>
            <person name="D'hoedt D."/>
            <person name="Nilius B."/>
            <person name="Mensenkamp A.R."/>
            <person name="Bindels R.J."/>
            <person name="Plomann M."/>
            <person name="Heller S."/>
        </authorList>
    </citation>
    <scope>SUBCELLULAR LOCATION</scope>
    <scope>INTERACTION WITH PACSIN1; PACSIN2 AND PACSIN3</scope>
    <scope>MUTAGENESIS OF 142-PRO-PRO-143</scope>
    <scope>TISSUE SPECIFICITY</scope>
</reference>
<reference key="14">
    <citation type="journal article" date="2008" name="J. Biol. Chem.">
        <title>Stimulus-specific modulation of the cation channel TRPV4 by PACSIN 3.</title>
        <authorList>
            <person name="D'hoedt D."/>
            <person name="Owsianik G."/>
            <person name="Prenen J."/>
            <person name="Cuajungco M.P."/>
            <person name="Grimm C."/>
            <person name="Heller S."/>
            <person name="Voets T."/>
            <person name="Nilius B."/>
        </authorList>
    </citation>
    <scope>FUNCTION</scope>
    <scope>INTERACTION WITH PACSIN3</scope>
</reference>
<reference key="15">
    <citation type="journal article" date="2008" name="J. Cell Biol.">
        <title>TRPP2 and TRPV4 form a polymodal sensory channel complex.</title>
        <authorList>
            <person name="Kottgen M."/>
            <person name="Buchholz B."/>
            <person name="Garcia-Gonzalez M.A."/>
            <person name="Kotsis F."/>
            <person name="Fu X."/>
            <person name="Doerken M."/>
            <person name="Boehlke C."/>
            <person name="Steffl D."/>
            <person name="Tauber R."/>
            <person name="Wegierski T."/>
            <person name="Nitschke R."/>
            <person name="Suzuki M."/>
            <person name="Kramer-Zucker A."/>
            <person name="Germino G.G."/>
            <person name="Watnick T."/>
            <person name="Prenen J."/>
            <person name="Nilius B."/>
            <person name="Kuehn E.W."/>
            <person name="Walz G."/>
        </authorList>
    </citation>
    <scope>FUNCTION</scope>
    <scope>INTERACTION WITH PKD2</scope>
    <scope>SUBCELLULAR LOCATION</scope>
</reference>
<reference key="16">
    <citation type="journal article" date="2009" name="J. Biol. Chem.">
        <title>Tyrosine phosphorylation modulates the activity of TRPV4 in response to defined stimuli.</title>
        <authorList>
            <person name="Wegierski T."/>
            <person name="Lewandrowski U."/>
            <person name="Muller B."/>
            <person name="Sickmann A."/>
            <person name="Walz G."/>
        </authorList>
    </citation>
    <scope>PHOSPHORYLATION AT TYR-110 AND TYR-805</scope>
    <scope>MUTAGENESIS OF TYR-110 AND TYR-805</scope>
</reference>
<reference key="17">
    <citation type="journal article" date="2010" name="Biochem. Biophys. Res. Commun.">
        <title>Identification of a protein kinase C-dependent phosphorylation site involved in sensitization of TRPV4 channel.</title>
        <authorList>
            <person name="Peng H."/>
            <person name="Lewandrowski U."/>
            <person name="Muller B."/>
            <person name="Sickmann A."/>
            <person name="Walz G."/>
            <person name="Wegierski T."/>
        </authorList>
    </citation>
    <scope>TRANSPORTER ACTIVITY</scope>
    <scope>PHOSPHORYLATION AT SER-824</scope>
    <scope>MUTAGENESIS OF SER-824</scope>
</reference>
<reference key="18">
    <citation type="journal article" date="2010" name="Cell">
        <title>A tissue-specific atlas of mouse protein phosphorylation and expression.</title>
        <authorList>
            <person name="Huttlin E.L."/>
            <person name="Jedrychowski M.P."/>
            <person name="Elias J.E."/>
            <person name="Goswami T."/>
            <person name="Rad R."/>
            <person name="Beausoleil S.A."/>
            <person name="Villen J."/>
            <person name="Haas W."/>
            <person name="Sowa M.E."/>
            <person name="Gygi S.P."/>
        </authorList>
    </citation>
    <scope>IDENTIFICATION BY MASS SPECTROMETRY [LARGE SCALE ANALYSIS]</scope>
    <source>
        <tissue>Kidney</tissue>
    </source>
</reference>
<reference key="19">
    <citation type="journal article" date="2012" name="Cell">
        <title>TRPV4 is a regulator of adipose oxidative metabolism, inflammation, and energy homeostasis.</title>
        <authorList>
            <person name="Ye L."/>
            <person name="Kleiner S."/>
            <person name="Wu J."/>
            <person name="Sah R."/>
            <person name="Gupta R.K."/>
            <person name="Banks A.S."/>
            <person name="Cohen P."/>
            <person name="Khandekar M.J."/>
            <person name="Bostrom P."/>
            <person name="Mepani R.J."/>
            <person name="Laznik D."/>
            <person name="Kamenecka T.M."/>
            <person name="Song X."/>
            <person name="Liedtke W."/>
            <person name="Mootha V.K."/>
            <person name="Puigserver P."/>
            <person name="Griffin P.R."/>
            <person name="Clapham D.E."/>
            <person name="Spiegelman B.M."/>
        </authorList>
    </citation>
    <scope>FUNCTION</scope>
    <scope>DISRUPTION PHENOTYPE</scope>
</reference>
<reference key="20">
    <citation type="journal article" date="2014" name="FASEB J.">
        <title>Modulation of water efflux through functional interaction between TRPV4 and TMEM16A/anoctamin 1.</title>
        <authorList>
            <person name="Takayama Y."/>
            <person name="Shibasaki K."/>
            <person name="Suzuki Y."/>
            <person name="Yamanaka A."/>
            <person name="Tominaga M."/>
        </authorList>
    </citation>
    <scope>INTERACTION WITH ANO1</scope>
    <scope>SUBCELLULAR LOCATION</scope>
</reference>
<reference key="21">
    <citation type="journal article" date="2010" name="J. Biol. Chem.">
        <title>The TRPV4 channel contributes to intercellular junction formation in keratinocytes.</title>
        <authorList>
            <person name="Sokabe T."/>
            <person name="Fukumi-Tominaga T."/>
            <person name="Yonemura S."/>
            <person name="Mizuno A."/>
            <person name="Tominaga M."/>
        </authorList>
    </citation>
    <scope>FUNCTION</scope>
    <scope>DISRUPTION PHENOTYPE</scope>
    <scope>SUBCELLULAR LOCATION</scope>
    <scope>INTERACTION WITH CTNBB1 AND CDH1</scope>
</reference>
<reference key="22">
    <citation type="journal article" date="2016" name="Am. J. Physiol.">
        <title>Nax signaling evoked by an increase in [Na+] in CSF induces water intake via EET-mediated TRPV4 activation.</title>
        <authorList>
            <person name="Sakuta H."/>
            <person name="Nishihara E."/>
            <person name="Hiyama T.Y."/>
            <person name="Lin C.H."/>
            <person name="Noda M."/>
        </authorList>
    </citation>
    <scope>FUNCTION</scope>
    <scope>DISRUPTION PHENOTYPE</scope>
</reference>
<dbReference type="EMBL" id="AF263522">
    <property type="protein sequence ID" value="AAG28028.1"/>
    <property type="status" value="ALT_FRAME"/>
    <property type="molecule type" value="mRNA"/>
</dbReference>
<dbReference type="EMBL" id="AJ296078">
    <property type="protein sequence ID" value="CAC20703.1"/>
    <property type="molecule type" value="mRNA"/>
</dbReference>
<dbReference type="EMBL" id="AF208026">
    <property type="protein sequence ID" value="AAG17543.1"/>
    <property type="molecule type" value="mRNA"/>
</dbReference>
<dbReference type="EMBL" id="AB021875">
    <property type="protein sequence ID" value="BAA83731.2"/>
    <property type="molecule type" value="mRNA"/>
</dbReference>
<dbReference type="EMBL" id="AF279672">
    <property type="protein sequence ID" value="AAK69486.1"/>
    <property type="status" value="ALT_INIT"/>
    <property type="molecule type" value="mRNA"/>
</dbReference>
<dbReference type="EMBL" id="BC127052">
    <property type="protein sequence ID" value="AAI27053.1"/>
    <property type="molecule type" value="mRNA"/>
</dbReference>
<dbReference type="CCDS" id="CCDS19568.1"/>
<dbReference type="RefSeq" id="NP_071300.2">
    <property type="nucleotide sequence ID" value="NM_022017.3"/>
</dbReference>
<dbReference type="RefSeq" id="XP_006530495.2">
    <property type="nucleotide sequence ID" value="XM_006530432.2"/>
</dbReference>
<dbReference type="PDB" id="8J1B">
    <property type="method" value="EM"/>
    <property type="resolution" value="3.72 A"/>
    <property type="chains" value="A/B/C/D=137-801"/>
</dbReference>
<dbReference type="PDB" id="8J1D">
    <property type="method" value="EM"/>
    <property type="resolution" value="3.59 A"/>
    <property type="chains" value="A/B/C/D=137-801"/>
</dbReference>
<dbReference type="PDB" id="8J1F">
    <property type="method" value="EM"/>
    <property type="resolution" value="3.62 A"/>
    <property type="chains" value="A/B/C/D=137-801"/>
</dbReference>
<dbReference type="PDB" id="8J1H">
    <property type="method" value="EM"/>
    <property type="resolution" value="3.88 A"/>
    <property type="chains" value="A/B/C/D=137-801"/>
</dbReference>
<dbReference type="PDB" id="8JKM">
    <property type="method" value="EM"/>
    <property type="resolution" value="3.98 A"/>
    <property type="chains" value="A/B/C/D=137-801"/>
</dbReference>
<dbReference type="PDBsum" id="8J1B"/>
<dbReference type="PDBsum" id="8J1D"/>
<dbReference type="PDBsum" id="8J1F"/>
<dbReference type="PDBsum" id="8J1H"/>
<dbReference type="PDBsum" id="8JKM"/>
<dbReference type="EMDB" id="EMD-35918"/>
<dbReference type="EMDB" id="EMD-35919"/>
<dbReference type="EMDB" id="EMD-35921"/>
<dbReference type="EMDB" id="EMD-35922"/>
<dbReference type="EMDB" id="EMD-36373"/>
<dbReference type="SMR" id="Q9EPK8"/>
<dbReference type="DIP" id="DIP-44011N"/>
<dbReference type="FunCoup" id="Q9EPK8">
    <property type="interactions" value="26"/>
</dbReference>
<dbReference type="IntAct" id="Q9EPK8">
    <property type="interactions" value="6"/>
</dbReference>
<dbReference type="MINT" id="Q9EPK8"/>
<dbReference type="STRING" id="10090.ENSMUSP00000071859"/>
<dbReference type="BindingDB" id="Q9EPK8"/>
<dbReference type="ChEMBL" id="CHEMBL6126"/>
<dbReference type="DrugCentral" id="Q9EPK8"/>
<dbReference type="GuidetoPHARMACOLOGY" id="510"/>
<dbReference type="GlyCosmos" id="Q9EPK8">
    <property type="glycosylation" value="1 site, No reported glycans"/>
</dbReference>
<dbReference type="GlyGen" id="Q9EPK8">
    <property type="glycosylation" value="1 site"/>
</dbReference>
<dbReference type="iPTMnet" id="Q9EPK8"/>
<dbReference type="PhosphoSitePlus" id="Q9EPK8"/>
<dbReference type="jPOST" id="Q9EPK8"/>
<dbReference type="PaxDb" id="10090-ENSMUSP00000071859"/>
<dbReference type="ProteomicsDB" id="298140"/>
<dbReference type="Antibodypedia" id="1477">
    <property type="antibodies" value="398 antibodies from 35 providers"/>
</dbReference>
<dbReference type="DNASU" id="63873"/>
<dbReference type="Ensembl" id="ENSMUST00000071968.9">
    <property type="protein sequence ID" value="ENSMUSP00000071859.3"/>
    <property type="gene ID" value="ENSMUSG00000014158.13"/>
</dbReference>
<dbReference type="Ensembl" id="ENSMUST00000112225.8">
    <property type="protein sequence ID" value="ENSMUSP00000107844.2"/>
    <property type="gene ID" value="ENSMUSG00000014158.13"/>
</dbReference>
<dbReference type="GeneID" id="63873"/>
<dbReference type="KEGG" id="mmu:63873"/>
<dbReference type="UCSC" id="uc008yzu.1">
    <property type="organism name" value="mouse"/>
</dbReference>
<dbReference type="AGR" id="MGI:1926945"/>
<dbReference type="CTD" id="59341"/>
<dbReference type="MGI" id="MGI:1926945">
    <property type="gene designation" value="Trpv4"/>
</dbReference>
<dbReference type="VEuPathDB" id="HostDB:ENSMUSG00000014158"/>
<dbReference type="eggNOG" id="KOG3676">
    <property type="taxonomic scope" value="Eukaryota"/>
</dbReference>
<dbReference type="GeneTree" id="ENSGT00940000158615"/>
<dbReference type="HOGENOM" id="CLU_012795_1_0_1"/>
<dbReference type="InParanoid" id="Q9EPK8"/>
<dbReference type="OMA" id="GSCPTDQ"/>
<dbReference type="OrthoDB" id="533508at2759"/>
<dbReference type="PhylomeDB" id="Q9EPK8"/>
<dbReference type="TreeFam" id="TF314711"/>
<dbReference type="Reactome" id="R-MMU-3295583">
    <property type="pathway name" value="TRP channels"/>
</dbReference>
<dbReference type="Reactome" id="R-MMU-9856530">
    <property type="pathway name" value="High laminar flow shear stress activates signaling by PIEZO1 and PECAM1:CDH5:KDR in endothelial cells"/>
</dbReference>
<dbReference type="BioGRID-ORCS" id="63873">
    <property type="hits" value="3 hits in 76 CRISPR screens"/>
</dbReference>
<dbReference type="ChiTaRS" id="Trpv4">
    <property type="organism name" value="mouse"/>
</dbReference>
<dbReference type="PRO" id="PR:Q9EPK8"/>
<dbReference type="Proteomes" id="UP000000589">
    <property type="component" value="Chromosome 5"/>
</dbReference>
<dbReference type="RNAct" id="Q9EPK8">
    <property type="molecule type" value="protein"/>
</dbReference>
<dbReference type="Bgee" id="ENSMUSG00000014158">
    <property type="expression patterns" value="Expressed in right kidney and 162 other cell types or tissues"/>
</dbReference>
<dbReference type="ExpressionAtlas" id="Q9EPK8">
    <property type="expression patterns" value="baseline and differential"/>
</dbReference>
<dbReference type="GO" id="GO:0005912">
    <property type="term" value="C:adherens junction"/>
    <property type="evidence" value="ECO:0000314"/>
    <property type="project" value="UniProtKB"/>
</dbReference>
<dbReference type="GO" id="GO:0016324">
    <property type="term" value="C:apical plasma membrane"/>
    <property type="evidence" value="ECO:0007669"/>
    <property type="project" value="UniProtKB-SubCell"/>
</dbReference>
<dbReference type="GO" id="GO:0009986">
    <property type="term" value="C:cell surface"/>
    <property type="evidence" value="ECO:0007669"/>
    <property type="project" value="Ensembl"/>
</dbReference>
<dbReference type="GO" id="GO:0005929">
    <property type="term" value="C:cilium"/>
    <property type="evidence" value="ECO:0000314"/>
    <property type="project" value="MGI"/>
</dbReference>
<dbReference type="GO" id="GO:0030864">
    <property type="term" value="C:cortical actin cytoskeleton"/>
    <property type="evidence" value="ECO:0007669"/>
    <property type="project" value="Ensembl"/>
</dbReference>
<dbReference type="GO" id="GO:0005881">
    <property type="term" value="C:cytoplasmic microtubule"/>
    <property type="evidence" value="ECO:0007669"/>
    <property type="project" value="Ensembl"/>
</dbReference>
<dbReference type="GO" id="GO:0030175">
    <property type="term" value="C:filopodium"/>
    <property type="evidence" value="ECO:0007669"/>
    <property type="project" value="Ensembl"/>
</dbReference>
<dbReference type="GO" id="GO:0005925">
    <property type="term" value="C:focal adhesion"/>
    <property type="evidence" value="ECO:0007669"/>
    <property type="project" value="Ensembl"/>
</dbReference>
<dbReference type="GO" id="GO:0030426">
    <property type="term" value="C:growth cone"/>
    <property type="evidence" value="ECO:0007669"/>
    <property type="project" value="Ensembl"/>
</dbReference>
<dbReference type="GO" id="GO:0030027">
    <property type="term" value="C:lamellipodium"/>
    <property type="evidence" value="ECO:0007669"/>
    <property type="project" value="Ensembl"/>
</dbReference>
<dbReference type="GO" id="GO:0005886">
    <property type="term" value="C:plasma membrane"/>
    <property type="evidence" value="ECO:0000314"/>
    <property type="project" value="UniProtKB"/>
</dbReference>
<dbReference type="GO" id="GO:0032587">
    <property type="term" value="C:ruffle membrane"/>
    <property type="evidence" value="ECO:0007669"/>
    <property type="project" value="Ensembl"/>
</dbReference>
<dbReference type="GO" id="GO:0051015">
    <property type="term" value="F:actin filament binding"/>
    <property type="evidence" value="ECO:0007669"/>
    <property type="project" value="Ensembl"/>
</dbReference>
<dbReference type="GO" id="GO:0043014">
    <property type="term" value="F:alpha-tubulin binding"/>
    <property type="evidence" value="ECO:0007669"/>
    <property type="project" value="Ensembl"/>
</dbReference>
<dbReference type="GO" id="GO:0005524">
    <property type="term" value="F:ATP binding"/>
    <property type="evidence" value="ECO:0007669"/>
    <property type="project" value="UniProtKB-KW"/>
</dbReference>
<dbReference type="GO" id="GO:0048487">
    <property type="term" value="F:beta-tubulin binding"/>
    <property type="evidence" value="ECO:0007669"/>
    <property type="project" value="Ensembl"/>
</dbReference>
<dbReference type="GO" id="GO:0005262">
    <property type="term" value="F:calcium channel activity"/>
    <property type="evidence" value="ECO:0000314"/>
    <property type="project" value="UniProtKB"/>
</dbReference>
<dbReference type="GO" id="GO:0005516">
    <property type="term" value="F:calmodulin binding"/>
    <property type="evidence" value="ECO:0000250"/>
    <property type="project" value="UniProtKB"/>
</dbReference>
<dbReference type="GO" id="GO:0042802">
    <property type="term" value="F:identical protein binding"/>
    <property type="evidence" value="ECO:0007669"/>
    <property type="project" value="Ensembl"/>
</dbReference>
<dbReference type="GO" id="GO:0008289">
    <property type="term" value="F:lipid binding"/>
    <property type="evidence" value="ECO:0007669"/>
    <property type="project" value="UniProtKB-KW"/>
</dbReference>
<dbReference type="GO" id="GO:0046872">
    <property type="term" value="F:metal ion binding"/>
    <property type="evidence" value="ECO:0007669"/>
    <property type="project" value="UniProtKB-KW"/>
</dbReference>
<dbReference type="GO" id="GO:0008017">
    <property type="term" value="F:microtubule binding"/>
    <property type="evidence" value="ECO:0007669"/>
    <property type="project" value="Ensembl"/>
</dbReference>
<dbReference type="GO" id="GO:0005261">
    <property type="term" value="F:monoatomic cation channel activity"/>
    <property type="evidence" value="ECO:0000250"/>
    <property type="project" value="UniProtKB"/>
</dbReference>
<dbReference type="GO" id="GO:0005034">
    <property type="term" value="F:osmosensor activity"/>
    <property type="evidence" value="ECO:0000314"/>
    <property type="project" value="MGI"/>
</dbReference>
<dbReference type="GO" id="GO:0019901">
    <property type="term" value="F:protein kinase binding"/>
    <property type="evidence" value="ECO:0000353"/>
    <property type="project" value="BHF-UCL"/>
</dbReference>
<dbReference type="GO" id="GO:0005080">
    <property type="term" value="F:protein kinase C binding"/>
    <property type="evidence" value="ECO:0007669"/>
    <property type="project" value="Ensembl"/>
</dbReference>
<dbReference type="GO" id="GO:0042169">
    <property type="term" value="F:SH2 domain binding"/>
    <property type="evidence" value="ECO:0000353"/>
    <property type="project" value="BHF-UCL"/>
</dbReference>
<dbReference type="GO" id="GO:0015275">
    <property type="term" value="F:stretch-activated, monoatomic cation-selective, calcium channel activity"/>
    <property type="evidence" value="ECO:0007669"/>
    <property type="project" value="Ensembl"/>
</dbReference>
<dbReference type="GO" id="GO:0007015">
    <property type="term" value="P:actin filament organization"/>
    <property type="evidence" value="ECO:0007669"/>
    <property type="project" value="Ensembl"/>
</dbReference>
<dbReference type="GO" id="GO:0097497">
    <property type="term" value="P:blood vessel endothelial cell delamination"/>
    <property type="evidence" value="ECO:0007669"/>
    <property type="project" value="Ensembl"/>
</dbReference>
<dbReference type="GO" id="GO:0070509">
    <property type="term" value="P:calcium ion import"/>
    <property type="evidence" value="ECO:0000314"/>
    <property type="project" value="BHF-UCL"/>
</dbReference>
<dbReference type="GO" id="GO:1902656">
    <property type="term" value="P:calcium ion import into cytosol"/>
    <property type="evidence" value="ECO:0000250"/>
    <property type="project" value="UniProtKB"/>
</dbReference>
<dbReference type="GO" id="GO:0060351">
    <property type="term" value="P:cartilage development involved in endochondral bone morphogenesis"/>
    <property type="evidence" value="ECO:0007669"/>
    <property type="project" value="Ensembl"/>
</dbReference>
<dbReference type="GO" id="GO:0007043">
    <property type="term" value="P:cell-cell junction assembly"/>
    <property type="evidence" value="ECO:0000315"/>
    <property type="project" value="UniProtKB"/>
</dbReference>
<dbReference type="GO" id="GO:0071476">
    <property type="term" value="P:cellular hypotonic response"/>
    <property type="evidence" value="ECO:0000314"/>
    <property type="project" value="BHF-UCL"/>
</dbReference>
<dbReference type="GO" id="GO:0071477">
    <property type="term" value="P:cellular hypotonic salinity response"/>
    <property type="evidence" value="ECO:0000315"/>
    <property type="project" value="UniProtKB"/>
</dbReference>
<dbReference type="GO" id="GO:0034605">
    <property type="term" value="P:cellular response to heat"/>
    <property type="evidence" value="ECO:0000315"/>
    <property type="project" value="UniProtKB"/>
</dbReference>
<dbReference type="GO" id="GO:0071470">
    <property type="term" value="P:cellular response to osmotic stress"/>
    <property type="evidence" value="ECO:0000315"/>
    <property type="project" value="UniProtKB"/>
</dbReference>
<dbReference type="GO" id="GO:0043622">
    <property type="term" value="P:cortical microtubule organization"/>
    <property type="evidence" value="ECO:0007669"/>
    <property type="project" value="Ensembl"/>
</dbReference>
<dbReference type="GO" id="GO:0002024">
    <property type="term" value="P:diet induced thermogenesis"/>
    <property type="evidence" value="ECO:0000315"/>
    <property type="project" value="UniProtKB"/>
</dbReference>
<dbReference type="GO" id="GO:0097009">
    <property type="term" value="P:energy homeostasis"/>
    <property type="evidence" value="ECO:0000315"/>
    <property type="project" value="UniProtKB"/>
</dbReference>
<dbReference type="GO" id="GO:0042593">
    <property type="term" value="P:glucose homeostasis"/>
    <property type="evidence" value="ECO:0000315"/>
    <property type="project" value="UniProtKB"/>
</dbReference>
<dbReference type="GO" id="GO:0042538">
    <property type="term" value="P:hyperosmotic salinity response"/>
    <property type="evidence" value="ECO:0000315"/>
    <property type="project" value="MGI"/>
</dbReference>
<dbReference type="GO" id="GO:0006874">
    <property type="term" value="P:intracellular calcium ion homeostasis"/>
    <property type="evidence" value="ECO:0000315"/>
    <property type="project" value="UniProtKB"/>
</dbReference>
<dbReference type="GO" id="GO:0046785">
    <property type="term" value="P:microtubule polymerization"/>
    <property type="evidence" value="ECO:0007669"/>
    <property type="project" value="Ensembl"/>
</dbReference>
<dbReference type="GO" id="GO:0050891">
    <property type="term" value="P:multicellular organismal-level water homeostasis"/>
    <property type="evidence" value="ECO:0007669"/>
    <property type="project" value="Ensembl"/>
</dbReference>
<dbReference type="GO" id="GO:1903444">
    <property type="term" value="P:negative regulation of brown fat cell differentiation"/>
    <property type="evidence" value="ECO:0000315"/>
    <property type="project" value="UniProtKB"/>
</dbReference>
<dbReference type="GO" id="GO:0010977">
    <property type="term" value="P:negative regulation of neuron projection development"/>
    <property type="evidence" value="ECO:0007669"/>
    <property type="project" value="Ensembl"/>
</dbReference>
<dbReference type="GO" id="GO:0000122">
    <property type="term" value="P:negative regulation of transcription by RNA polymerase II"/>
    <property type="evidence" value="ECO:0000315"/>
    <property type="project" value="UniProtKB"/>
</dbReference>
<dbReference type="GO" id="GO:0007231">
    <property type="term" value="P:osmosensory signaling pathway"/>
    <property type="evidence" value="ECO:0000314"/>
    <property type="project" value="BHF-UCL"/>
</dbReference>
<dbReference type="GO" id="GO:0071651">
    <property type="term" value="P:positive regulation of chemokine (C-C motif) ligand 5 production"/>
    <property type="evidence" value="ECO:0000315"/>
    <property type="project" value="UniProtKB"/>
</dbReference>
<dbReference type="GO" id="GO:2000340">
    <property type="term" value="P:positive regulation of chemokine (C-X-C motif) ligand 1 production"/>
    <property type="evidence" value="ECO:0000315"/>
    <property type="project" value="UniProtKB"/>
</dbReference>
<dbReference type="GO" id="GO:0007204">
    <property type="term" value="P:positive regulation of cytosolic calcium ion concentration"/>
    <property type="evidence" value="ECO:0007669"/>
    <property type="project" value="Ensembl"/>
</dbReference>
<dbReference type="GO" id="GO:0070374">
    <property type="term" value="P:positive regulation of ERK1 and ERK2 cascade"/>
    <property type="evidence" value="ECO:0000315"/>
    <property type="project" value="UniProtKB"/>
</dbReference>
<dbReference type="GO" id="GO:0010628">
    <property type="term" value="P:positive regulation of gene expression"/>
    <property type="evidence" value="ECO:0000315"/>
    <property type="project" value="UniProtKB"/>
</dbReference>
<dbReference type="GO" id="GO:0050729">
    <property type="term" value="P:positive regulation of inflammatory response"/>
    <property type="evidence" value="ECO:0000315"/>
    <property type="project" value="UniProtKB"/>
</dbReference>
<dbReference type="GO" id="GO:0032755">
    <property type="term" value="P:positive regulation of interleukin-6 production"/>
    <property type="evidence" value="ECO:0000315"/>
    <property type="project" value="UniProtKB"/>
</dbReference>
<dbReference type="GO" id="GO:0046330">
    <property type="term" value="P:positive regulation of JNK cascade"/>
    <property type="evidence" value="ECO:0000315"/>
    <property type="project" value="UniProtKB"/>
</dbReference>
<dbReference type="GO" id="GO:0010759">
    <property type="term" value="P:positive regulation of macrophage chemotaxis"/>
    <property type="evidence" value="ECO:0000315"/>
    <property type="project" value="UniProtKB"/>
</dbReference>
<dbReference type="GO" id="GO:0071642">
    <property type="term" value="P:positive regulation of macrophage inflammatory protein 1 alpha production"/>
    <property type="evidence" value="ECO:0000315"/>
    <property type="project" value="UniProtKB"/>
</dbReference>
<dbReference type="GO" id="GO:0031117">
    <property type="term" value="P:positive regulation of microtubule depolymerization"/>
    <property type="evidence" value="ECO:0007669"/>
    <property type="project" value="Ensembl"/>
</dbReference>
<dbReference type="GO" id="GO:0071639">
    <property type="term" value="P:positive regulation of monocyte chemotactic protein-1 production"/>
    <property type="evidence" value="ECO:0000315"/>
    <property type="project" value="UniProtKB"/>
</dbReference>
<dbReference type="GO" id="GO:0045989">
    <property type="term" value="P:positive regulation of striated muscle contraction"/>
    <property type="evidence" value="ECO:0007669"/>
    <property type="project" value="Ensembl"/>
</dbReference>
<dbReference type="GO" id="GO:0043117">
    <property type="term" value="P:positive regulation of vascular permeability"/>
    <property type="evidence" value="ECO:0000315"/>
    <property type="project" value="UniProtKB"/>
</dbReference>
<dbReference type="GO" id="GO:1903715">
    <property type="term" value="P:regulation of aerobic respiration"/>
    <property type="evidence" value="ECO:0000315"/>
    <property type="project" value="UniProtKB"/>
</dbReference>
<dbReference type="GO" id="GO:0047484">
    <property type="term" value="P:regulation of response to osmotic stress"/>
    <property type="evidence" value="ECO:0000315"/>
    <property type="project" value="MGI"/>
</dbReference>
<dbReference type="GO" id="GO:0001666">
    <property type="term" value="P:response to hypoxia"/>
    <property type="evidence" value="ECO:0007669"/>
    <property type="project" value="Ensembl"/>
</dbReference>
<dbReference type="GO" id="GO:0032868">
    <property type="term" value="P:response to insulin"/>
    <property type="evidence" value="ECO:0000315"/>
    <property type="project" value="UniProtKB"/>
</dbReference>
<dbReference type="GO" id="GO:0006970">
    <property type="term" value="P:response to osmotic stress"/>
    <property type="evidence" value="ECO:0000314"/>
    <property type="project" value="MGI"/>
</dbReference>
<dbReference type="GO" id="GO:0030103">
    <property type="term" value="P:vasopressin secretion"/>
    <property type="evidence" value="ECO:0000315"/>
    <property type="project" value="MGI"/>
</dbReference>
<dbReference type="CDD" id="cd22195">
    <property type="entry name" value="TRPV4"/>
    <property type="match status" value="1"/>
</dbReference>
<dbReference type="FunFam" id="1.10.287.70:FF:000074">
    <property type="entry name" value="Transient receptor potential cation channel subfamily V member 1"/>
    <property type="match status" value="1"/>
</dbReference>
<dbReference type="FunFam" id="1.25.40.20:FF:000018">
    <property type="entry name" value="Transient receptor potential cation channel subfamily V member 1"/>
    <property type="match status" value="1"/>
</dbReference>
<dbReference type="Gene3D" id="1.10.287.70">
    <property type="match status" value="1"/>
</dbReference>
<dbReference type="Gene3D" id="1.25.40.20">
    <property type="entry name" value="Ankyrin repeat-containing domain"/>
    <property type="match status" value="1"/>
</dbReference>
<dbReference type="InterPro" id="IPR002110">
    <property type="entry name" value="Ankyrin_rpt"/>
</dbReference>
<dbReference type="InterPro" id="IPR036770">
    <property type="entry name" value="Ankyrin_rpt-contain_sf"/>
</dbReference>
<dbReference type="InterPro" id="IPR005821">
    <property type="entry name" value="Ion_trans_dom"/>
</dbReference>
<dbReference type="InterPro" id="IPR024862">
    <property type="entry name" value="TRPV"/>
</dbReference>
<dbReference type="InterPro" id="IPR008347">
    <property type="entry name" value="TrpV1-4"/>
</dbReference>
<dbReference type="InterPro" id="IPR008348">
    <property type="entry name" value="TrpV4"/>
</dbReference>
<dbReference type="NCBIfam" id="TIGR00870">
    <property type="entry name" value="trp"/>
    <property type="match status" value="1"/>
</dbReference>
<dbReference type="PANTHER" id="PTHR10582:SF4">
    <property type="entry name" value="TRANSIENT RECEPTOR POTENTIAL CATION CHANNEL SUBFAMILY V MEMBER 4"/>
    <property type="match status" value="1"/>
</dbReference>
<dbReference type="PANTHER" id="PTHR10582">
    <property type="entry name" value="TRANSIENT RECEPTOR POTENTIAL ION CHANNEL PROTEIN"/>
    <property type="match status" value="1"/>
</dbReference>
<dbReference type="Pfam" id="PF00023">
    <property type="entry name" value="Ank"/>
    <property type="match status" value="1"/>
</dbReference>
<dbReference type="Pfam" id="PF00520">
    <property type="entry name" value="Ion_trans"/>
    <property type="match status" value="1"/>
</dbReference>
<dbReference type="PRINTS" id="PR01768">
    <property type="entry name" value="TRPVRECEPTOR"/>
</dbReference>
<dbReference type="PRINTS" id="PR01769">
    <property type="entry name" value="VRL2RECEPTOR"/>
</dbReference>
<dbReference type="SMART" id="SM00248">
    <property type="entry name" value="ANK"/>
    <property type="match status" value="3"/>
</dbReference>
<dbReference type="SUPFAM" id="SSF48403">
    <property type="entry name" value="Ankyrin repeat"/>
    <property type="match status" value="1"/>
</dbReference>
<dbReference type="PROSITE" id="PS50297">
    <property type="entry name" value="ANK_REP_REGION"/>
    <property type="match status" value="1"/>
</dbReference>
<dbReference type="PROSITE" id="PS50088">
    <property type="entry name" value="ANK_REPEAT"/>
    <property type="match status" value="1"/>
</dbReference>
<feature type="chain" id="PRO_0000215348" description="Transient receptor potential cation channel subfamily V member 4">
    <location>
        <begin position="1"/>
        <end position="871"/>
    </location>
</feature>
<feature type="topological domain" description="Cytoplasmic" evidence="2">
    <location>
        <begin position="1"/>
        <end position="469"/>
    </location>
</feature>
<feature type="transmembrane region" description="Helical" evidence="2">
    <location>
        <begin position="470"/>
        <end position="490"/>
    </location>
</feature>
<feature type="topological domain" description="Extracellular" evidence="2">
    <location>
        <begin position="491"/>
        <end position="507"/>
    </location>
</feature>
<feature type="transmembrane region" description="Helical" evidence="2">
    <location>
        <begin position="508"/>
        <end position="534"/>
    </location>
</feature>
<feature type="topological domain" description="Cytoplasmic" evidence="2">
    <location>
        <begin position="535"/>
        <end position="547"/>
    </location>
</feature>
<feature type="transmembrane region" description="Helical" evidence="2">
    <location>
        <begin position="548"/>
        <end position="568"/>
    </location>
</feature>
<feature type="topological domain" description="Extracellular" evidence="2">
    <location>
        <begin position="569"/>
        <end position="572"/>
    </location>
</feature>
<feature type="transmembrane region" description="Helical" evidence="2">
    <location>
        <begin position="573"/>
        <end position="593"/>
    </location>
</feature>
<feature type="topological domain" description="Cytoplasmic" evidence="2">
    <location>
        <begin position="594"/>
        <end position="608"/>
    </location>
</feature>
<feature type="transmembrane region" description="Helical" evidence="2">
    <location>
        <begin position="609"/>
        <end position="636"/>
    </location>
</feature>
<feature type="topological domain" description="Extracellular" evidence="2">
    <location>
        <begin position="637"/>
        <end position="665"/>
    </location>
</feature>
<feature type="intramembrane region" description="Pore-forming" evidence="2">
    <location>
        <begin position="666"/>
        <end position="685"/>
    </location>
</feature>
<feature type="topological domain" description="Extracellular" evidence="2">
    <location>
        <begin position="686"/>
        <end position="693"/>
    </location>
</feature>
<feature type="transmembrane region" description="Helical" evidence="2">
    <location>
        <begin position="694"/>
        <end position="722"/>
    </location>
</feature>
<feature type="topological domain" description="Cytoplasmic" evidence="2">
    <location>
        <begin position="723"/>
        <end position="871"/>
    </location>
</feature>
<feature type="repeat" description="ANK 1">
    <location>
        <begin position="237"/>
        <end position="266"/>
    </location>
</feature>
<feature type="repeat" description="ANK 2">
    <location>
        <begin position="284"/>
        <end position="313"/>
    </location>
</feature>
<feature type="repeat" description="ANK 3">
    <location>
        <begin position="369"/>
        <end position="398"/>
    </location>
</feature>
<feature type="region of interest" description="Disordered" evidence="5">
    <location>
        <begin position="1"/>
        <end position="68"/>
    </location>
</feature>
<feature type="region of interest" description="Disordered" evidence="5">
    <location>
        <begin position="110"/>
        <end position="143"/>
    </location>
</feature>
<feature type="region of interest" description="Interaction with calmodulin and ITPR3" evidence="3">
    <location>
        <begin position="812"/>
        <end position="831"/>
    </location>
</feature>
<feature type="region of interest" description="Disordered" evidence="5">
    <location>
        <begin position="850"/>
        <end position="871"/>
    </location>
</feature>
<feature type="short sequence motif" description="Selectivity filter" evidence="27">
    <location>
        <begin position="679"/>
        <end position="682"/>
    </location>
</feature>
<feature type="compositionally biased region" description="Basic and acidic residues" evidence="5">
    <location>
        <begin position="116"/>
        <end position="129"/>
    </location>
</feature>
<feature type="binding site" evidence="3">
    <location>
        <position position="192"/>
    </location>
    <ligand>
        <name>ATP</name>
        <dbReference type="ChEBI" id="CHEBI:30616"/>
    </ligand>
</feature>
<feature type="binding site" evidence="3">
    <location>
        <position position="197"/>
    </location>
    <ligand>
        <name>ATP</name>
        <dbReference type="ChEBI" id="CHEBI:30616"/>
    </ligand>
</feature>
<feature type="binding site" evidence="3">
    <location>
        <position position="201"/>
    </location>
    <ligand>
        <name>ATP</name>
        <dbReference type="ChEBI" id="CHEBI:30616"/>
    </ligand>
</feature>
<feature type="binding site" evidence="3">
    <location>
        <begin position="236"/>
        <end position="239"/>
    </location>
    <ligand>
        <name>ATP</name>
        <dbReference type="ChEBI" id="CHEBI:30616"/>
    </ligand>
</feature>
<feature type="binding site" evidence="3">
    <location>
        <position position="248"/>
    </location>
    <ligand>
        <name>ATP</name>
        <dbReference type="ChEBI" id="CHEBI:30616"/>
    </ligand>
</feature>
<feature type="binding site" evidence="1">
    <location>
        <begin position="249"/>
        <end position="251"/>
    </location>
    <ligand>
        <name>a 1,2-diacyl-sn-glycero-3-phospho-(1D-myo-inositol-4,5-bisphosphate)</name>
        <dbReference type="ChEBI" id="CHEBI:58456"/>
    </ligand>
</feature>
<feature type="binding site" evidence="1">
    <location>
        <begin position="296"/>
        <end position="299"/>
    </location>
    <ligand>
        <name>a 1,2-diacyl-sn-glycero-3-phospho-(1D-myo-inositol-4,5-bisphosphate)</name>
        <dbReference type="ChEBI" id="CHEBI:58456"/>
    </ligand>
</feature>
<feature type="binding site" evidence="1">
    <location>
        <position position="344"/>
    </location>
    <ligand>
        <name>a 1,2-diacyl-sn-glycero-3-phospho-(1D-myo-inositol-4,5-bisphosphate)</name>
        <dbReference type="ChEBI" id="CHEBI:58456"/>
    </ligand>
</feature>
<feature type="binding site" evidence="4">
    <location>
        <position position="682"/>
    </location>
    <ligand>
        <name>Ca(2+)</name>
        <dbReference type="ChEBI" id="CHEBI:29108"/>
        <note>ligand shared between two neighboring subunits</note>
    </ligand>
</feature>
<feature type="modified residue" description="Phosphotyrosine; by SRC-type Tyr-kinases" evidence="19">
    <location>
        <position position="110"/>
    </location>
</feature>
<feature type="modified residue" description="Phosphotyrosine; by LYN" evidence="28">
    <location>
        <position position="253"/>
    </location>
</feature>
<feature type="modified residue" description="Phosphotyrosine; by SRC-type Tyr-kinases" evidence="19">
    <location>
        <position position="805"/>
    </location>
</feature>
<feature type="modified residue" description="Phosphoserine; by PKC and PKA" evidence="20">
    <location>
        <position position="824"/>
    </location>
</feature>
<feature type="glycosylation site" description="N-linked (GlcNAc...) asparagine" evidence="29">
    <location>
        <position position="651"/>
    </location>
</feature>
<feature type="mutagenesis site" description="Increases protein abundance at plasma membrane. Greatly reduces channel activity." evidence="19">
    <original>Y</original>
    <variation>F</variation>
    <location>
        <position position="110"/>
    </location>
</feature>
<feature type="mutagenesis site" description="Strongly reduced interaction with PACSIN3." evidence="16">
    <original>PP</original>
    <variation>AL</variation>
    <location>
        <begin position="142"/>
        <end position="143"/>
    </location>
</feature>
<feature type="mutagenesis site" description="Results are conflicting as to whether hypotonicity-dependent channel activity is abolished." evidence="10 13">
    <original>Y</original>
    <variation>F</variation>
    <location>
        <position position="253"/>
    </location>
</feature>
<feature type="mutagenesis site" description="Reduces channel activation by 4-alpha-PDD and heat but not hypo-osmotic cell swelling." evidence="13">
    <original>Y</original>
    <variation>A</variation>
    <location>
        <position position="556"/>
    </location>
</feature>
<feature type="mutagenesis site" description="No changes in channel activation by 4-alpha-PDD or heat." evidence="13">
    <original>Y</original>
    <variation>F</variation>
    <location>
        <position position="556"/>
    </location>
</feature>
<feature type="mutagenesis site" description="No changes in channel activity." evidence="13">
    <original>S</original>
    <variation>A</variation>
    <location>
        <position position="557"/>
    </location>
</feature>
<feature type="mutagenesis site" description="Loss of a probable N-glycosylation site. Increased expression at the cell membrane, leading to increased ion currents." evidence="14">
    <original>N</original>
    <variation>Q</variation>
    <location>
        <position position="651"/>
    </location>
</feature>
<feature type="mutagenesis site" description="Greatly reduces Ca(2+) permeation and channel rectification; when associated with A-682." evidence="9">
    <original>D</original>
    <variation>A</variation>
    <location>
        <position position="672"/>
    </location>
</feature>
<feature type="mutagenesis site" description="No effect on channel pore properties." evidence="9">
    <original>K</original>
    <variation>A</variation>
    <location>
        <position position="675"/>
    </location>
</feature>
<feature type="mutagenesis site" description="Impairs Ca(2+) permeation." evidence="9">
    <original>M</original>
    <variation>A</variation>
    <location>
        <position position="680"/>
    </location>
</feature>
<feature type="mutagenesis site" description="Greatly reduces Ca(2+) permeation and channel rectification; when associated with A-672." evidence="9">
    <original>D</original>
    <variation>A</variation>
    <location>
        <position position="682"/>
    </location>
</feature>
<feature type="mutagenesis site" description="No changes in channel activity." evidence="19">
    <original>Y</original>
    <variation>F</variation>
    <location>
        <position position="805"/>
    </location>
</feature>
<feature type="mutagenesis site" description="Loss of phosphorylation but no significant effect on channel activity." evidence="20">
    <original>S</original>
    <variation>A</variation>
    <location>
        <position position="824"/>
    </location>
</feature>
<feature type="mutagenesis site" description="Phosphomimetic mutant which enhances channel function." evidence="20">
    <original>S</original>
    <variation>D</variation>
    <location>
        <position position="824"/>
    </location>
</feature>
<feature type="sequence conflict" description="In Ref. 1; AAG28028." evidence="26" ref="1">
    <original>G</original>
    <variation>S</variation>
    <location>
        <position position="45"/>
    </location>
</feature>
<feature type="sequence conflict" description="In Ref. 3; AAG17543 and 5; AAK69486." evidence="26" ref="3 5">
    <original>L</original>
    <variation>R</variation>
    <location>
        <position position="90"/>
    </location>
</feature>
<feature type="sequence conflict" description="In Ref. 4; BAA83731." evidence="26" ref="4">
    <original>A</original>
    <variation>T</variation>
    <location>
        <position position="137"/>
    </location>
</feature>
<feature type="sequence conflict" description="In Ref. 4; BAA83731." evidence="26" ref="4">
    <original>IP</original>
    <variation>LQ</variation>
    <location>
        <begin position="210"/>
        <end position="211"/>
    </location>
</feature>
<feature type="sequence conflict" description="In Ref. 1; AAG28028." evidence="26" ref="1">
    <original>S</original>
    <variation>P</variation>
    <location>
        <position position="477"/>
    </location>
</feature>
<feature type="sequence conflict" description="In Ref. 4; BAA83731." evidence="26" ref="4">
    <original>N</original>
    <variation>S</variation>
    <location>
        <position position="784"/>
    </location>
</feature>
<keyword id="KW-0002">3D-structure</keyword>
<keyword id="KW-0040">ANK repeat</keyword>
<keyword id="KW-0067">ATP-binding</keyword>
<keyword id="KW-0106">Calcium</keyword>
<keyword id="KW-0107">Calcium channel</keyword>
<keyword id="KW-0109">Calcium transport</keyword>
<keyword id="KW-0112">Calmodulin-binding</keyword>
<keyword id="KW-0965">Cell junction</keyword>
<keyword id="KW-1003">Cell membrane</keyword>
<keyword id="KW-0966">Cell projection</keyword>
<keyword id="KW-0969">Cilium</keyword>
<keyword id="KW-0325">Glycoprotein</keyword>
<keyword id="KW-0407">Ion channel</keyword>
<keyword id="KW-0406">Ion transport</keyword>
<keyword id="KW-0446">Lipid-binding</keyword>
<keyword id="KW-0472">Membrane</keyword>
<keyword id="KW-0479">Metal-binding</keyword>
<keyword id="KW-0547">Nucleotide-binding</keyword>
<keyword id="KW-0597">Phosphoprotein</keyword>
<keyword id="KW-1185">Reference proteome</keyword>
<keyword id="KW-0677">Repeat</keyword>
<keyword id="KW-0812">Transmembrane</keyword>
<keyword id="KW-1133">Transmembrane helix</keyword>
<keyword id="KW-0813">Transport</keyword>
<sequence length="871" mass="98027">MADPGDGPRAAPGEVAEPPGDESGTSGGEAFPLSSLANLFEGEEGSSSLSPVDASRPAGPGDGRPNLRMKFQGAFRKGVPNPIDLLESTLYESSVVPGPKKAPMDSLFDYGTYRHHPSDNKRWRRKVVEKQPQSPKAPAPQPPPILKVFNRPILFDIVSRGSTADLDGLLSFLLTHKKRLTDEEFREPSTGKTCLPKALLNLSNGRNDTIPVLLDIAERTGNMREFINSPFRDIYYRGQTSLHIAIERRCKHYVELLVAQGADVHAQARGRFFQPKDEGGYFYFGELPLSLAACTNQPHIVNYLTENPHKKADMRRQDSRGNTVLHALVAIADNTRENTKFVTKMYDLLLLKCSRLFPDSNLETVLNNDGLSPLMMAAKTGKIGVFQHIIRREVTDEDTRHLSRKFKDWAYGPVYSSLYDLSSLDTCGEEVSVLEILVYNSKIENRHEMLAVEPINELLRDKWRKFGAVSFYINVVSYLCAMVIFTLTAYYQPLEGTPPYPYRTTVDYLRLAGEVITLFTGVLFFFTSIKDLFTKKCPGVNSLFVDGSFQLLYFIYSVLVVVSAALYLAGIEAYLAVMVFALVLGWMNALYFTRGLKLTGTYSIMIQKILFKDLFRFLLVYLLFMIGYASALVTLLNPCTNMKVCDEDQSNCTVPTYPACRDSETFSAFLLDLFKLTIGMGDLEMLSSAKYPVVFILLLVTYIILTFVLLLNMLIALMGETVGQVSKESKHIWKLQWATTILDIERSFPVFLRKAFRSGEMVTVGKSSDGTPDRRWCFRVDEVNWSHWNQNLGIINEDPGKSEIYQYYGFSHTVGRLRRDRWSSVVPRVVELNKNSSADEVVVPLDNLGNPNCDGHQQGYAPKWRTDDAPL</sequence>
<protein>
    <recommendedName>
        <fullName>Transient receptor potential cation channel subfamily V member 4</fullName>
        <shortName>TrpV4</shortName>
    </recommendedName>
    <alternativeName>
        <fullName>Osm-9-like TRP channel 4</fullName>
        <shortName>OTRPC4</shortName>
    </alternativeName>
    <alternativeName>
        <fullName>Transient receptor potential protein 12</fullName>
        <shortName>TRP12</shortName>
    </alternativeName>
    <alternativeName>
        <fullName>Vanilloid receptor-like channel 2</fullName>
    </alternativeName>
    <alternativeName>
        <fullName>Vanilloid receptor-like protein 2</fullName>
    </alternativeName>
    <alternativeName>
        <fullName evidence="25">Vanilloid receptor-related osmotically-activated channel</fullName>
        <shortName evidence="25">VR-OAC</shortName>
    </alternativeName>
</protein>
<accession>Q9EPK8</accession>
<accession>A0JNY0</accession>
<accession>Q91XR5</accession>
<accession>Q9EQZ4</accession>
<accession>Q9ERZ7</accession>
<accession>Q9ES76</accession>
<evidence type="ECO:0000250" key="1">
    <source>
        <dbReference type="UniProtKB" id="A0A1D5PXA5"/>
    </source>
</evidence>
<evidence type="ECO:0000250" key="2">
    <source>
        <dbReference type="UniProtKB" id="O35433"/>
    </source>
</evidence>
<evidence type="ECO:0000250" key="3">
    <source>
        <dbReference type="UniProtKB" id="Q9HBA0"/>
    </source>
</evidence>
<evidence type="ECO:0000250" key="4">
    <source>
        <dbReference type="UniProtKB" id="Q9R186"/>
    </source>
</evidence>
<evidence type="ECO:0000256" key="5">
    <source>
        <dbReference type="SAM" id="MobiDB-lite"/>
    </source>
</evidence>
<evidence type="ECO:0000269" key="6">
    <source>
    </source>
</evidence>
<evidence type="ECO:0000269" key="7">
    <source>
    </source>
</evidence>
<evidence type="ECO:0000269" key="8">
    <source>
    </source>
</evidence>
<evidence type="ECO:0000269" key="9">
    <source>
    </source>
</evidence>
<evidence type="ECO:0000269" key="10">
    <source>
    </source>
</evidence>
<evidence type="ECO:0000269" key="11">
    <source>
    </source>
</evidence>
<evidence type="ECO:0000269" key="12">
    <source>
    </source>
</evidence>
<evidence type="ECO:0000269" key="13">
    <source>
    </source>
</evidence>
<evidence type="ECO:0000269" key="14">
    <source>
    </source>
</evidence>
<evidence type="ECO:0000269" key="15">
    <source>
    </source>
</evidence>
<evidence type="ECO:0000269" key="16">
    <source>
    </source>
</evidence>
<evidence type="ECO:0000269" key="17">
    <source>
    </source>
</evidence>
<evidence type="ECO:0000269" key="18">
    <source>
    </source>
</evidence>
<evidence type="ECO:0000269" key="19">
    <source>
    </source>
</evidence>
<evidence type="ECO:0000269" key="20">
    <source>
    </source>
</evidence>
<evidence type="ECO:0000269" key="21">
    <source>
    </source>
</evidence>
<evidence type="ECO:0000269" key="22">
    <source>
    </source>
</evidence>
<evidence type="ECO:0000269" key="23">
    <source>
    </source>
</evidence>
<evidence type="ECO:0000269" key="24">
    <source>
    </source>
</evidence>
<evidence type="ECO:0000303" key="25">
    <source>
    </source>
</evidence>
<evidence type="ECO:0000305" key="26"/>
<evidence type="ECO:0000305" key="27">
    <source>
    </source>
</evidence>
<evidence type="ECO:0000305" key="28">
    <source>
    </source>
</evidence>
<evidence type="ECO:0000305" key="29">
    <source>
    </source>
</evidence>